<evidence type="ECO:0000255" key="1">
    <source>
        <dbReference type="HAMAP-Rule" id="MF_01864"/>
    </source>
</evidence>
<evidence type="ECO:0000255" key="2">
    <source>
        <dbReference type="PROSITE-ProRule" id="PRU01266"/>
    </source>
</evidence>
<accession>Q3IW81</accession>
<sequence length="436" mass="47999">MSEARKLFIKTYGCQMNVYDSERMAEALGAKGYVLTEVAEEADMVLLNTCHIREKAAEKVYSDLGRLRPLKTAKPDLKIGVAGCVAQAEGEEILKRMPLVDLVVGPQSYHRLPDMLERTEGGARVVDTDFPEEDKFDHLPERKATRGPAAFLTVQEGCDKFCAFCVVPYTRGAEVSRPFARLMAEARGLVERGVREITLLGQNVNAWSNDGRGLGGLIRELARIDGLERLRYTTSHPNDMADDLIEAHGAEPKLMPYLHLPVQSGSDRILKAMNRKHTAEHYLRLIERIRAARPDILLTSDFIVGFPGETEADFEATLDLIRAVGFGSAFSFKYSARPGTPAAEKPELPAEVCDARLQRLQALVTEQQRAAQMAMVGREVGVLYEKAGRLPGQMVGKSDHLHAVHVEDKAGQVGDLVRVRITASAPNSLAGERLGA</sequence>
<name>MIAB_CERS4</name>
<organism>
    <name type="scientific">Cereibacter sphaeroides (strain ATCC 17023 / DSM 158 / JCM 6121 / CCUG 31486 / LMG 2827 / NBRC 12203 / NCIMB 8253 / ATH 2.4.1.)</name>
    <name type="common">Rhodobacter sphaeroides</name>
    <dbReference type="NCBI Taxonomy" id="272943"/>
    <lineage>
        <taxon>Bacteria</taxon>
        <taxon>Pseudomonadati</taxon>
        <taxon>Pseudomonadota</taxon>
        <taxon>Alphaproteobacteria</taxon>
        <taxon>Rhodobacterales</taxon>
        <taxon>Paracoccaceae</taxon>
        <taxon>Cereibacter</taxon>
    </lineage>
</organism>
<keyword id="KW-0004">4Fe-4S</keyword>
<keyword id="KW-0963">Cytoplasm</keyword>
<keyword id="KW-0408">Iron</keyword>
<keyword id="KW-0411">Iron-sulfur</keyword>
<keyword id="KW-0479">Metal-binding</keyword>
<keyword id="KW-1185">Reference proteome</keyword>
<keyword id="KW-0949">S-adenosyl-L-methionine</keyword>
<keyword id="KW-0808">Transferase</keyword>
<keyword id="KW-0819">tRNA processing</keyword>
<comment type="function">
    <text evidence="1">Catalyzes the methylthiolation of N6-(dimethylallyl)adenosine (i(6)A), leading to the formation of 2-methylthio-N6-(dimethylallyl)adenosine (ms(2)i(6)A) at position 37 in tRNAs that read codons beginning with uridine.</text>
</comment>
<comment type="catalytic activity">
    <reaction evidence="1">
        <text>N(6)-dimethylallyladenosine(37) in tRNA + (sulfur carrier)-SH + AH2 + 2 S-adenosyl-L-methionine = 2-methylsulfanyl-N(6)-dimethylallyladenosine(37) in tRNA + (sulfur carrier)-H + 5'-deoxyadenosine + L-methionine + A + S-adenosyl-L-homocysteine + 2 H(+)</text>
        <dbReference type="Rhea" id="RHEA:37067"/>
        <dbReference type="Rhea" id="RHEA-COMP:10375"/>
        <dbReference type="Rhea" id="RHEA-COMP:10376"/>
        <dbReference type="Rhea" id="RHEA-COMP:14737"/>
        <dbReference type="Rhea" id="RHEA-COMP:14739"/>
        <dbReference type="ChEBI" id="CHEBI:13193"/>
        <dbReference type="ChEBI" id="CHEBI:15378"/>
        <dbReference type="ChEBI" id="CHEBI:17319"/>
        <dbReference type="ChEBI" id="CHEBI:17499"/>
        <dbReference type="ChEBI" id="CHEBI:29917"/>
        <dbReference type="ChEBI" id="CHEBI:57844"/>
        <dbReference type="ChEBI" id="CHEBI:57856"/>
        <dbReference type="ChEBI" id="CHEBI:59789"/>
        <dbReference type="ChEBI" id="CHEBI:64428"/>
        <dbReference type="ChEBI" id="CHEBI:74415"/>
        <dbReference type="ChEBI" id="CHEBI:74417"/>
        <dbReference type="EC" id="2.8.4.3"/>
    </reaction>
</comment>
<comment type="cofactor">
    <cofactor evidence="1">
        <name>[4Fe-4S] cluster</name>
        <dbReference type="ChEBI" id="CHEBI:49883"/>
    </cofactor>
    <text evidence="1">Binds 2 [4Fe-4S] clusters. One cluster is coordinated with 3 cysteines and an exchangeable S-adenosyl-L-methionine.</text>
</comment>
<comment type="subunit">
    <text evidence="1">Monomer.</text>
</comment>
<comment type="subcellular location">
    <subcellularLocation>
        <location evidence="1">Cytoplasm</location>
    </subcellularLocation>
</comment>
<comment type="similarity">
    <text evidence="1">Belongs to the methylthiotransferase family. MiaB subfamily.</text>
</comment>
<gene>
    <name evidence="1" type="primary">miaB</name>
    <name type="ordered locus">RHOS4_36350</name>
    <name type="ORF">RSP_3600</name>
</gene>
<dbReference type="EC" id="2.8.4.3" evidence="1"/>
<dbReference type="EMBL" id="CP000144">
    <property type="protein sequence ID" value="ABA81203.1"/>
    <property type="molecule type" value="Genomic_DNA"/>
</dbReference>
<dbReference type="RefSeq" id="WP_011339445.1">
    <property type="nucleotide sequence ID" value="NC_007494.2"/>
</dbReference>
<dbReference type="RefSeq" id="YP_355104.1">
    <property type="nucleotide sequence ID" value="NC_007494.2"/>
</dbReference>
<dbReference type="SMR" id="Q3IW81"/>
<dbReference type="STRING" id="272943.RSP_3600"/>
<dbReference type="EnsemblBacteria" id="ABA81203">
    <property type="protein sequence ID" value="ABA81203"/>
    <property type="gene ID" value="RSP_3600"/>
</dbReference>
<dbReference type="GeneID" id="3722117"/>
<dbReference type="KEGG" id="rsp:RSP_3600"/>
<dbReference type="PATRIC" id="fig|272943.9.peg.4037"/>
<dbReference type="eggNOG" id="COG0621">
    <property type="taxonomic scope" value="Bacteria"/>
</dbReference>
<dbReference type="OrthoDB" id="9805215at2"/>
<dbReference type="PhylomeDB" id="Q3IW81"/>
<dbReference type="Proteomes" id="UP000002703">
    <property type="component" value="Chromosome 2"/>
</dbReference>
<dbReference type="GO" id="GO:0005829">
    <property type="term" value="C:cytosol"/>
    <property type="evidence" value="ECO:0007669"/>
    <property type="project" value="TreeGrafter"/>
</dbReference>
<dbReference type="GO" id="GO:0051539">
    <property type="term" value="F:4 iron, 4 sulfur cluster binding"/>
    <property type="evidence" value="ECO:0007669"/>
    <property type="project" value="UniProtKB-UniRule"/>
</dbReference>
<dbReference type="GO" id="GO:0046872">
    <property type="term" value="F:metal ion binding"/>
    <property type="evidence" value="ECO:0007669"/>
    <property type="project" value="UniProtKB-KW"/>
</dbReference>
<dbReference type="GO" id="GO:0035597">
    <property type="term" value="F:N6-isopentenyladenosine methylthiotransferase activity"/>
    <property type="evidence" value="ECO:0007669"/>
    <property type="project" value="TreeGrafter"/>
</dbReference>
<dbReference type="CDD" id="cd01335">
    <property type="entry name" value="Radical_SAM"/>
    <property type="match status" value="1"/>
</dbReference>
<dbReference type="FunFam" id="3.40.50.12160:FF:000001">
    <property type="entry name" value="tRNA-2-methylthio-N(6)-dimethylallyladenosine synthase"/>
    <property type="match status" value="1"/>
</dbReference>
<dbReference type="FunFam" id="3.80.30.20:FF:000001">
    <property type="entry name" value="tRNA-2-methylthio-N(6)-dimethylallyladenosine synthase 2"/>
    <property type="match status" value="1"/>
</dbReference>
<dbReference type="Gene3D" id="3.40.50.12160">
    <property type="entry name" value="Methylthiotransferase, N-terminal domain"/>
    <property type="match status" value="1"/>
</dbReference>
<dbReference type="Gene3D" id="3.80.30.20">
    <property type="entry name" value="tm_1862 like domain"/>
    <property type="match status" value="1"/>
</dbReference>
<dbReference type="HAMAP" id="MF_01864">
    <property type="entry name" value="tRNA_metthiotr_MiaB"/>
    <property type="match status" value="1"/>
</dbReference>
<dbReference type="InterPro" id="IPR006638">
    <property type="entry name" value="Elp3/MiaA/NifB-like_rSAM"/>
</dbReference>
<dbReference type="InterPro" id="IPR005839">
    <property type="entry name" value="Methylthiotransferase"/>
</dbReference>
<dbReference type="InterPro" id="IPR020612">
    <property type="entry name" value="Methylthiotransferase_CS"/>
</dbReference>
<dbReference type="InterPro" id="IPR013848">
    <property type="entry name" value="Methylthiotransferase_N"/>
</dbReference>
<dbReference type="InterPro" id="IPR038135">
    <property type="entry name" value="Methylthiotransferase_N_sf"/>
</dbReference>
<dbReference type="InterPro" id="IPR006463">
    <property type="entry name" value="MiaB_methiolase"/>
</dbReference>
<dbReference type="InterPro" id="IPR007197">
    <property type="entry name" value="rSAM"/>
</dbReference>
<dbReference type="InterPro" id="IPR023404">
    <property type="entry name" value="rSAM_horseshoe"/>
</dbReference>
<dbReference type="InterPro" id="IPR002792">
    <property type="entry name" value="TRAM_dom"/>
</dbReference>
<dbReference type="NCBIfam" id="TIGR01574">
    <property type="entry name" value="miaB-methiolase"/>
    <property type="match status" value="1"/>
</dbReference>
<dbReference type="NCBIfam" id="TIGR00089">
    <property type="entry name" value="MiaB/RimO family radical SAM methylthiotransferase"/>
    <property type="match status" value="1"/>
</dbReference>
<dbReference type="PANTHER" id="PTHR43020">
    <property type="entry name" value="CDK5 REGULATORY SUBUNIT-ASSOCIATED PROTEIN 1"/>
    <property type="match status" value="1"/>
</dbReference>
<dbReference type="PANTHER" id="PTHR43020:SF2">
    <property type="entry name" value="MITOCHONDRIAL TRNA METHYLTHIOTRANSFERASE CDK5RAP1"/>
    <property type="match status" value="1"/>
</dbReference>
<dbReference type="Pfam" id="PF04055">
    <property type="entry name" value="Radical_SAM"/>
    <property type="match status" value="1"/>
</dbReference>
<dbReference type="Pfam" id="PF01938">
    <property type="entry name" value="TRAM"/>
    <property type="match status" value="1"/>
</dbReference>
<dbReference type="Pfam" id="PF00919">
    <property type="entry name" value="UPF0004"/>
    <property type="match status" value="1"/>
</dbReference>
<dbReference type="SFLD" id="SFLDF00273">
    <property type="entry name" value="(dimethylallyl)adenosine_tRNA"/>
    <property type="match status" value="1"/>
</dbReference>
<dbReference type="SFLD" id="SFLDG01082">
    <property type="entry name" value="B12-binding_domain_containing"/>
    <property type="match status" value="1"/>
</dbReference>
<dbReference type="SFLD" id="SFLDS00029">
    <property type="entry name" value="Radical_SAM"/>
    <property type="match status" value="1"/>
</dbReference>
<dbReference type="SMART" id="SM00729">
    <property type="entry name" value="Elp3"/>
    <property type="match status" value="1"/>
</dbReference>
<dbReference type="SUPFAM" id="SSF102114">
    <property type="entry name" value="Radical SAM enzymes"/>
    <property type="match status" value="1"/>
</dbReference>
<dbReference type="PROSITE" id="PS51449">
    <property type="entry name" value="MTTASE_N"/>
    <property type="match status" value="1"/>
</dbReference>
<dbReference type="PROSITE" id="PS01278">
    <property type="entry name" value="MTTASE_RADICAL"/>
    <property type="match status" value="1"/>
</dbReference>
<dbReference type="PROSITE" id="PS51918">
    <property type="entry name" value="RADICAL_SAM"/>
    <property type="match status" value="1"/>
</dbReference>
<dbReference type="PROSITE" id="PS50926">
    <property type="entry name" value="TRAM"/>
    <property type="match status" value="1"/>
</dbReference>
<proteinExistence type="inferred from homology"/>
<reference key="1">
    <citation type="submission" date="2005-09" db="EMBL/GenBank/DDBJ databases">
        <title>Complete sequence of chromosome 2 of Rhodobacter sphaeroides 2.4.1.</title>
        <authorList>
            <person name="Copeland A."/>
            <person name="Lucas S."/>
            <person name="Lapidus A."/>
            <person name="Barry K."/>
            <person name="Detter J.C."/>
            <person name="Glavina T."/>
            <person name="Hammon N."/>
            <person name="Israni S."/>
            <person name="Pitluck S."/>
            <person name="Richardson P."/>
            <person name="Mackenzie C."/>
            <person name="Choudhary M."/>
            <person name="Larimer F."/>
            <person name="Hauser L.J."/>
            <person name="Land M."/>
            <person name="Donohue T.J."/>
            <person name="Kaplan S."/>
        </authorList>
    </citation>
    <scope>NUCLEOTIDE SEQUENCE [LARGE SCALE GENOMIC DNA]</scope>
    <source>
        <strain>ATCC 17023 / DSM 158 / JCM 6121 / CCUG 31486 / LMG 2827 / NBRC 12203 / NCIMB 8253 / ATH 2.4.1.</strain>
    </source>
</reference>
<protein>
    <recommendedName>
        <fullName evidence="1">tRNA-2-methylthio-N(6)-dimethylallyladenosine synthase</fullName>
        <ecNumber evidence="1">2.8.4.3</ecNumber>
    </recommendedName>
    <alternativeName>
        <fullName evidence="1">(Dimethylallyl)adenosine tRNA methylthiotransferase MiaB</fullName>
    </alternativeName>
    <alternativeName>
        <fullName evidence="1">tRNA-i(6)A37 methylthiotransferase</fullName>
    </alternativeName>
</protein>
<feature type="chain" id="PRO_0000374487" description="tRNA-2-methylthio-N(6)-dimethylallyladenosine synthase">
    <location>
        <begin position="1"/>
        <end position="436"/>
    </location>
</feature>
<feature type="domain" description="MTTase N-terminal" evidence="1">
    <location>
        <begin position="5"/>
        <end position="121"/>
    </location>
</feature>
<feature type="domain" description="Radical SAM core" evidence="2">
    <location>
        <begin position="144"/>
        <end position="374"/>
    </location>
</feature>
<feature type="domain" description="TRAM" evidence="1">
    <location>
        <begin position="373"/>
        <end position="435"/>
    </location>
</feature>
<feature type="binding site" evidence="1">
    <location>
        <position position="14"/>
    </location>
    <ligand>
        <name>[4Fe-4S] cluster</name>
        <dbReference type="ChEBI" id="CHEBI:49883"/>
        <label>1</label>
    </ligand>
</feature>
<feature type="binding site" evidence="1">
    <location>
        <position position="50"/>
    </location>
    <ligand>
        <name>[4Fe-4S] cluster</name>
        <dbReference type="ChEBI" id="CHEBI:49883"/>
        <label>1</label>
    </ligand>
</feature>
<feature type="binding site" evidence="1">
    <location>
        <position position="84"/>
    </location>
    <ligand>
        <name>[4Fe-4S] cluster</name>
        <dbReference type="ChEBI" id="CHEBI:49883"/>
        <label>1</label>
    </ligand>
</feature>
<feature type="binding site" evidence="1">
    <location>
        <position position="158"/>
    </location>
    <ligand>
        <name>[4Fe-4S] cluster</name>
        <dbReference type="ChEBI" id="CHEBI:49883"/>
        <label>2</label>
        <note>4Fe-4S-S-AdoMet</note>
    </ligand>
</feature>
<feature type="binding site" evidence="1">
    <location>
        <position position="162"/>
    </location>
    <ligand>
        <name>[4Fe-4S] cluster</name>
        <dbReference type="ChEBI" id="CHEBI:49883"/>
        <label>2</label>
        <note>4Fe-4S-S-AdoMet</note>
    </ligand>
</feature>
<feature type="binding site" evidence="1">
    <location>
        <position position="165"/>
    </location>
    <ligand>
        <name>[4Fe-4S] cluster</name>
        <dbReference type="ChEBI" id="CHEBI:49883"/>
        <label>2</label>
        <note>4Fe-4S-S-AdoMet</note>
    </ligand>
</feature>